<comment type="function">
    <text evidence="1">Involved in the biogenesis of TorA. Acts on TorA before the insertion of the molybdenum cofactor and, as a result, probably favors a conformation of the apoenzyme that is competent for acquiring the cofactor.</text>
</comment>
<comment type="subcellular location">
    <subcellularLocation>
        <location evidence="1">Cytoplasm</location>
    </subcellularLocation>
</comment>
<comment type="similarity">
    <text evidence="1">Belongs to the TorD/DmsD family. TorD subfamily.</text>
</comment>
<protein>
    <recommendedName>
        <fullName evidence="1">Chaperone protein TorD</fullName>
    </recommendedName>
</protein>
<keyword id="KW-0143">Chaperone</keyword>
<keyword id="KW-0963">Cytoplasm</keyword>
<name>TORD_ECOBW</name>
<reference key="1">
    <citation type="journal article" date="2009" name="J. Bacteriol.">
        <title>Genomic sequencing reveals regulatory mutations and recombinational events in the widely used MC4100 lineage of Escherichia coli K-12.</title>
        <authorList>
            <person name="Ferenci T."/>
            <person name="Zhou Z."/>
            <person name="Betteridge T."/>
            <person name="Ren Y."/>
            <person name="Liu Y."/>
            <person name="Feng L."/>
            <person name="Reeves P.R."/>
            <person name="Wang L."/>
        </authorList>
    </citation>
    <scope>NUCLEOTIDE SEQUENCE [LARGE SCALE GENOMIC DNA]</scope>
    <source>
        <strain>K12 / MC4100 / BW2952</strain>
    </source>
</reference>
<evidence type="ECO:0000255" key="1">
    <source>
        <dbReference type="HAMAP-Rule" id="MF_01150"/>
    </source>
</evidence>
<feature type="chain" id="PRO_1000213664" description="Chaperone protein TorD">
    <location>
        <begin position="1"/>
        <end position="199"/>
    </location>
</feature>
<sequence>MTTLTAQQIACVYAWLAQLFSRELDDEQLTQIASAQMAEWFSLLKNEPPLTAAVNELENRIATLTVRDDARLELAADFCGLFLMTDKQAALPYASAYKQDEQEIKRLLVEAGMETSGNFNEPADHLAIYLELLSHLHFSLGEGTVPARRIDSLRQKTLTALWQWLPEFVARCRQYDSFGFYAALSQLLLVLVECDHQNR</sequence>
<organism>
    <name type="scientific">Escherichia coli (strain K12 / MC4100 / BW2952)</name>
    <dbReference type="NCBI Taxonomy" id="595496"/>
    <lineage>
        <taxon>Bacteria</taxon>
        <taxon>Pseudomonadati</taxon>
        <taxon>Pseudomonadota</taxon>
        <taxon>Gammaproteobacteria</taxon>
        <taxon>Enterobacterales</taxon>
        <taxon>Enterobacteriaceae</taxon>
        <taxon>Escherichia</taxon>
    </lineage>
</organism>
<accession>C4ZQC6</accession>
<dbReference type="EMBL" id="CP001396">
    <property type="protein sequence ID" value="ACR62138.1"/>
    <property type="molecule type" value="Genomic_DNA"/>
</dbReference>
<dbReference type="RefSeq" id="WP_000209861.1">
    <property type="nucleotide sequence ID" value="NC_012759.1"/>
</dbReference>
<dbReference type="SMR" id="C4ZQC6"/>
<dbReference type="KEGG" id="ebw:BWG_0852"/>
<dbReference type="HOGENOM" id="CLU_077650_4_0_6"/>
<dbReference type="GO" id="GO:0005737">
    <property type="term" value="C:cytoplasm"/>
    <property type="evidence" value="ECO:0007669"/>
    <property type="project" value="UniProtKB-SubCell"/>
</dbReference>
<dbReference type="GO" id="GO:0051259">
    <property type="term" value="P:protein complex oligomerization"/>
    <property type="evidence" value="ECO:0007669"/>
    <property type="project" value="InterPro"/>
</dbReference>
<dbReference type="GO" id="GO:0006457">
    <property type="term" value="P:protein folding"/>
    <property type="evidence" value="ECO:0007669"/>
    <property type="project" value="UniProtKB-UniRule"/>
</dbReference>
<dbReference type="FunFam" id="1.20.120.1820:FF:000001">
    <property type="entry name" value="Chaperone protein TorD"/>
    <property type="match status" value="1"/>
</dbReference>
<dbReference type="FunFam" id="1.20.1280.20:FF:000003">
    <property type="entry name" value="Chaperone protein TorD"/>
    <property type="match status" value="1"/>
</dbReference>
<dbReference type="Gene3D" id="1.20.120.1820">
    <property type="match status" value="1"/>
</dbReference>
<dbReference type="Gene3D" id="1.20.1280.20">
    <property type="entry name" value="HscB, C-terminal domain"/>
    <property type="match status" value="1"/>
</dbReference>
<dbReference type="HAMAP" id="MF_01150">
    <property type="entry name" value="TorD"/>
    <property type="match status" value="1"/>
</dbReference>
<dbReference type="InterPro" id="IPR023069">
    <property type="entry name" value="Chaperone_TorD"/>
</dbReference>
<dbReference type="InterPro" id="IPR020945">
    <property type="entry name" value="DMSO/NO3_reduct_chaperone"/>
</dbReference>
<dbReference type="InterPro" id="IPR036386">
    <property type="entry name" value="HscB_C_sf"/>
</dbReference>
<dbReference type="InterPro" id="IPR036411">
    <property type="entry name" value="TorD-like_sf"/>
</dbReference>
<dbReference type="InterPro" id="IPR050289">
    <property type="entry name" value="TorD/DmsD_chaperones"/>
</dbReference>
<dbReference type="NCBIfam" id="NF003442">
    <property type="entry name" value="PRK04976.1"/>
    <property type="match status" value="1"/>
</dbReference>
<dbReference type="PANTHER" id="PTHR34227:SF11">
    <property type="entry name" value="CHAPERONE PROTEIN TORD"/>
    <property type="match status" value="1"/>
</dbReference>
<dbReference type="PANTHER" id="PTHR34227">
    <property type="entry name" value="CHAPERONE PROTEIN YCDY"/>
    <property type="match status" value="1"/>
</dbReference>
<dbReference type="Pfam" id="PF02613">
    <property type="entry name" value="Nitrate_red_del"/>
    <property type="match status" value="1"/>
</dbReference>
<dbReference type="SUPFAM" id="SSF89155">
    <property type="entry name" value="TorD-like"/>
    <property type="match status" value="1"/>
</dbReference>
<gene>
    <name evidence="1" type="primary">torD</name>
    <name type="ordered locus">BWG_0852</name>
</gene>
<proteinExistence type="inferred from homology"/>